<reference key="1">
    <citation type="submission" date="2016-12" db="EMBL/GenBank/DDBJ databases">
        <title>The genomes of Aspergillus section Nigri reveals drivers in fungal speciation.</title>
        <authorList>
            <consortium name="DOE Joint Genome Institute"/>
            <person name="Vesth T.C."/>
            <person name="Nybo J."/>
            <person name="Theobald S."/>
            <person name="Brandl J."/>
            <person name="Frisvad J.C."/>
            <person name="Nielsen K.F."/>
            <person name="Lyhne E.K."/>
            <person name="Kogle M.E."/>
            <person name="Kuo A."/>
            <person name="Riley R."/>
            <person name="Clum A."/>
            <person name="Nolan M."/>
            <person name="Lipzen A."/>
            <person name="Salamov A."/>
            <person name="Henrissat B."/>
            <person name="Wiebenga A."/>
            <person name="De Vries R.P."/>
            <person name="Grigoriev I.V."/>
            <person name="Mortensen U.H."/>
            <person name="Andersen M.R."/>
            <person name="Baker S.E."/>
        </authorList>
    </citation>
    <scope>NUCLEOTIDE SEQUENCE [LARGE SCALE GENOMIC DNA]</scope>
    <source>
        <strain>IBT 28561</strain>
    </source>
</reference>
<reference key="2">
    <citation type="journal article" date="2023" name="J. Nat. Prod.">
        <title>Biosynthetic characterization, heterologous production, and genomics-guided discovery of GABA-containing fungal heptapeptides.</title>
        <authorList>
            <person name="Wei X."/>
            <person name="Chan T.K."/>
            <person name="Kong C.T.D."/>
            <person name="Matsuda Y."/>
        </authorList>
    </citation>
    <scope>FUNCTION</scope>
    <scope>PATHWAY</scope>
</reference>
<dbReference type="EC" id="3.4.-.-" evidence="4"/>
<dbReference type="EMBL" id="MSFM01000006">
    <property type="protein sequence ID" value="PKY04127.1"/>
    <property type="molecule type" value="Genomic_DNA"/>
</dbReference>
<dbReference type="SMR" id="A0A2I1D2N1"/>
<dbReference type="VEuPathDB" id="FungiDB:P168DRAFT_297054"/>
<dbReference type="OrthoDB" id="5946976at2759"/>
<dbReference type="Proteomes" id="UP000234254">
    <property type="component" value="Unassembled WGS sequence"/>
</dbReference>
<dbReference type="GO" id="GO:0016787">
    <property type="term" value="F:hydrolase activity"/>
    <property type="evidence" value="ECO:0007669"/>
    <property type="project" value="UniProtKB-KW"/>
</dbReference>
<dbReference type="Gene3D" id="3.40.710.10">
    <property type="entry name" value="DD-peptidase/beta-lactamase superfamily"/>
    <property type="match status" value="1"/>
</dbReference>
<dbReference type="InterPro" id="IPR050491">
    <property type="entry name" value="Bact_CellWall_Synth/Modif"/>
</dbReference>
<dbReference type="InterPro" id="IPR001466">
    <property type="entry name" value="Beta-lactam-related"/>
</dbReference>
<dbReference type="InterPro" id="IPR012338">
    <property type="entry name" value="Beta-lactam/transpept-like"/>
</dbReference>
<dbReference type="InterPro" id="IPR021860">
    <property type="entry name" value="Peptidase_S12_Pab87-rel_C"/>
</dbReference>
<dbReference type="PANTHER" id="PTHR46825:SF9">
    <property type="entry name" value="BETA-LACTAMASE-RELATED DOMAIN-CONTAINING PROTEIN"/>
    <property type="match status" value="1"/>
</dbReference>
<dbReference type="PANTHER" id="PTHR46825">
    <property type="entry name" value="D-ALANYL-D-ALANINE-CARBOXYPEPTIDASE/ENDOPEPTIDASE AMPH"/>
    <property type="match status" value="1"/>
</dbReference>
<dbReference type="Pfam" id="PF00144">
    <property type="entry name" value="Beta-lactamase"/>
    <property type="match status" value="1"/>
</dbReference>
<dbReference type="Pfam" id="PF11954">
    <property type="entry name" value="DUF3471"/>
    <property type="match status" value="1"/>
</dbReference>
<dbReference type="SUPFAM" id="SSF56601">
    <property type="entry name" value="beta-lactamase/transpeptidase-like"/>
    <property type="match status" value="1"/>
</dbReference>
<feature type="chain" id="PRO_0000458913" description="Unguisins hydrolase ungD'">
    <location>
        <begin position="1"/>
        <end position="534"/>
    </location>
</feature>
<comment type="function">
    <text evidence="1 4">Hydrolase; part of the gene cluster that mediates the biosynthesis of the unguisins, gamma-aminobutyric acid (GABA)-containing fungal cyclic heptapeptides with the amino acid sequence cyclo-(D-Ala1-D-Val2-L-Leu3-beta-MePhe4-D-Ala5-D-Trp6-GABA7) for unguisin H and cyclo-(D-Ala1-D-Ala2-L-Leu3-beta-MePhe4-D-Ala5-D-Trp6-GABA7) for unguisin I (PubMed:36715406). Within the pathway, the hydrolase ungD' catalyzes the hydrolysis between the D-tryptophan and GABA residues of unguisins H and I to produce the corresponding linear peptides (Probable). The alanine racemase ungC' catalyzes the interconversion of L-alanine and D-alanine, providing the D-alanine which is accepted by the first adenylation domain of the nonribosomal peptide synthetase (NRPS) ungA', whereas the methyltransferase ungE' provides the (2R,3R)-beta-methylphenylalanine residue incorporated by the module 4 (Probable). UngA' is the main enzyme within the cluster which condenses the 7 residues using its respective 7 modules (Probable). The terminal condensation domain (Ct) is involved in cyclization with D-alanine and thereby releasing of unguisins H and I (Probable).</text>
</comment>
<comment type="pathway">
    <text evidence="4">Secondary metabolite biosynthesis.</text>
</comment>
<comment type="similarity">
    <text evidence="3">Belongs to the peptidase S12 family.</text>
</comment>
<proteinExistence type="inferred from homology"/>
<keyword id="KW-0378">Hydrolase</keyword>
<gene>
    <name evidence="2" type="primary">ungD'</name>
    <name type="ORF">P168DRAFT_297054</name>
</gene>
<organism>
    <name type="scientific">Aspergillus campestris (strain IBT 28561)</name>
    <dbReference type="NCBI Taxonomy" id="1392248"/>
    <lineage>
        <taxon>Eukaryota</taxon>
        <taxon>Fungi</taxon>
        <taxon>Dikarya</taxon>
        <taxon>Ascomycota</taxon>
        <taxon>Pezizomycotina</taxon>
        <taxon>Eurotiomycetes</taxon>
        <taxon>Eurotiomycetidae</taxon>
        <taxon>Eurotiales</taxon>
        <taxon>Aspergillaceae</taxon>
        <taxon>Aspergillus</taxon>
        <taxon>Aspergillus subgen. Circumdati</taxon>
    </lineage>
</organism>
<evidence type="ECO:0000269" key="1">
    <source>
    </source>
</evidence>
<evidence type="ECO:0000303" key="2">
    <source>
    </source>
</evidence>
<evidence type="ECO:0000305" key="3"/>
<evidence type="ECO:0000305" key="4">
    <source>
    </source>
</evidence>
<name>UNGD_ASPC2</name>
<sequence>MISKTEDSGDPLDQDFAEVVKQTLDRWHIPGMSVAVVDGPDTWTKGYGLAQLPNTNVTPDTLFYTGSTTKAFTAAVLSLLVDDNKNYPQVQWNTPVNQLLRDDFVLSHEWDTNNITIEDILSHRTGMPRHEFAFGGDYDGHPASLRDIVRSVRYMQRSAPPRTTYQYSNLMFIVASYLIETLTGKWIGDVFREKIWRPLGMDSTYLSLEDARASGKELAQGYLYNSSLPGYEPVPLKNKPEVSGAGAAISNIKDYAKWATALLKRAPDVLSPAGYSAIWSARTVTPTHDPFITPSAYALAWNTQVYQGVEIVWHDGGIDGFGTEIALIPSLGFAVVTQANTTYSSNYAGTALVYHLIDKKLDVAPDKRFDWNKWYEDLERQMKEAVKNARQTFYPTVPSPAPPPTLPIGKYTGNYWHPAYRQLTILWDEERNLLYADRKDSTTPCQLTFIPVSREFFLVRLTVVGAEAMLPAEFRLGPDGTPSMVGILWEPSLGDEKIWLKKEGDTHFKEMYGGIVDSTAGKKRVPDTIHPIDL</sequence>
<accession>A0A2I1D2N1</accession>
<protein>
    <recommendedName>
        <fullName evidence="2">Unguisins hydrolase ungD'</fullName>
        <ecNumber evidence="4">3.4.-.-</ecNumber>
    </recommendedName>
    <alternativeName>
        <fullName evidence="2">Unguisins biosynthesis cluster protein D'</fullName>
    </alternativeName>
</protein>